<protein>
    <recommendedName>
        <fullName evidence="1">Polyribonucleotide nucleotidyltransferase</fullName>
        <ecNumber evidence="1">2.7.7.8</ecNumber>
    </recommendedName>
    <alternativeName>
        <fullName evidence="1">Polynucleotide phosphorylase</fullName>
        <shortName evidence="1">PNPase</shortName>
    </alternativeName>
</protein>
<feature type="chain" id="PRO_0000329884" description="Polyribonucleotide nucleotidyltransferase">
    <location>
        <begin position="1"/>
        <end position="741"/>
    </location>
</feature>
<feature type="domain" description="KH" evidence="1">
    <location>
        <begin position="556"/>
        <end position="615"/>
    </location>
</feature>
<feature type="domain" description="S1 motif" evidence="1">
    <location>
        <begin position="625"/>
        <end position="693"/>
    </location>
</feature>
<feature type="region of interest" description="Disordered" evidence="2">
    <location>
        <begin position="695"/>
        <end position="741"/>
    </location>
</feature>
<feature type="compositionally biased region" description="Basic and acidic residues" evidence="2">
    <location>
        <begin position="698"/>
        <end position="713"/>
    </location>
</feature>
<feature type="compositionally biased region" description="Basic and acidic residues" evidence="2">
    <location>
        <begin position="723"/>
        <end position="741"/>
    </location>
</feature>
<feature type="binding site" evidence="1">
    <location>
        <position position="489"/>
    </location>
    <ligand>
        <name>Mg(2+)</name>
        <dbReference type="ChEBI" id="CHEBI:18420"/>
    </ligand>
</feature>
<feature type="binding site" evidence="1">
    <location>
        <position position="495"/>
    </location>
    <ligand>
        <name>Mg(2+)</name>
        <dbReference type="ChEBI" id="CHEBI:18420"/>
    </ligand>
</feature>
<reference key="1">
    <citation type="journal article" date="2004" name="Nat. Biotechnol.">
        <title>Complete sequence and comparative genome analysis of the dairy bacterium Streptococcus thermophilus.</title>
        <authorList>
            <person name="Bolotin A."/>
            <person name="Quinquis B."/>
            <person name="Renault P."/>
            <person name="Sorokin A."/>
            <person name="Ehrlich S.D."/>
            <person name="Kulakauskas S."/>
            <person name="Lapidus A."/>
            <person name="Goltsman E."/>
            <person name="Mazur M."/>
            <person name="Pusch G.D."/>
            <person name="Fonstein M."/>
            <person name="Overbeek R."/>
            <person name="Kyprides N."/>
            <person name="Purnelle B."/>
            <person name="Prozzi D."/>
            <person name="Ngui K."/>
            <person name="Masuy D."/>
            <person name="Hancy F."/>
            <person name="Burteau S."/>
            <person name="Boutry M."/>
            <person name="Delcour J."/>
            <person name="Goffeau A."/>
            <person name="Hols P."/>
        </authorList>
    </citation>
    <scope>NUCLEOTIDE SEQUENCE [LARGE SCALE GENOMIC DNA]</scope>
    <source>
        <strain>ATCC BAA-250 / LMG 18311</strain>
    </source>
</reference>
<name>PNP_STRT2</name>
<accession>Q5M6F9</accession>
<dbReference type="EC" id="2.7.7.8" evidence="1"/>
<dbReference type="EMBL" id="CP000023">
    <property type="protein sequence ID" value="AAV59810.1"/>
    <property type="molecule type" value="Genomic_DNA"/>
</dbReference>
<dbReference type="RefSeq" id="WP_011225302.1">
    <property type="nucleotide sequence ID" value="NC_006448.1"/>
</dbReference>
<dbReference type="SMR" id="Q5M6F9"/>
<dbReference type="STRING" id="264199.stu0081"/>
<dbReference type="GeneID" id="66898011"/>
<dbReference type="KEGG" id="stl:stu0081"/>
<dbReference type="PATRIC" id="fig|264199.4.peg.84"/>
<dbReference type="eggNOG" id="COG1185">
    <property type="taxonomic scope" value="Bacteria"/>
</dbReference>
<dbReference type="HOGENOM" id="CLU_004217_2_2_9"/>
<dbReference type="Proteomes" id="UP000001170">
    <property type="component" value="Chromosome"/>
</dbReference>
<dbReference type="GO" id="GO:0005829">
    <property type="term" value="C:cytosol"/>
    <property type="evidence" value="ECO:0007669"/>
    <property type="project" value="TreeGrafter"/>
</dbReference>
<dbReference type="GO" id="GO:0000175">
    <property type="term" value="F:3'-5'-RNA exonuclease activity"/>
    <property type="evidence" value="ECO:0007669"/>
    <property type="project" value="TreeGrafter"/>
</dbReference>
<dbReference type="GO" id="GO:0000287">
    <property type="term" value="F:magnesium ion binding"/>
    <property type="evidence" value="ECO:0007669"/>
    <property type="project" value="UniProtKB-UniRule"/>
</dbReference>
<dbReference type="GO" id="GO:0004654">
    <property type="term" value="F:polyribonucleotide nucleotidyltransferase activity"/>
    <property type="evidence" value="ECO:0007669"/>
    <property type="project" value="UniProtKB-UniRule"/>
</dbReference>
<dbReference type="GO" id="GO:0003723">
    <property type="term" value="F:RNA binding"/>
    <property type="evidence" value="ECO:0007669"/>
    <property type="project" value="UniProtKB-UniRule"/>
</dbReference>
<dbReference type="GO" id="GO:0006402">
    <property type="term" value="P:mRNA catabolic process"/>
    <property type="evidence" value="ECO:0007669"/>
    <property type="project" value="UniProtKB-UniRule"/>
</dbReference>
<dbReference type="GO" id="GO:0006396">
    <property type="term" value="P:RNA processing"/>
    <property type="evidence" value="ECO:0007669"/>
    <property type="project" value="InterPro"/>
</dbReference>
<dbReference type="CDD" id="cd02393">
    <property type="entry name" value="KH-I_PNPase"/>
    <property type="match status" value="1"/>
</dbReference>
<dbReference type="CDD" id="cd11363">
    <property type="entry name" value="RNase_PH_PNPase_1"/>
    <property type="match status" value="1"/>
</dbReference>
<dbReference type="CDD" id="cd11364">
    <property type="entry name" value="RNase_PH_PNPase_2"/>
    <property type="match status" value="1"/>
</dbReference>
<dbReference type="FunFam" id="3.30.1370.10:FF:000001">
    <property type="entry name" value="Polyribonucleotide nucleotidyltransferase"/>
    <property type="match status" value="1"/>
</dbReference>
<dbReference type="FunFam" id="3.30.230.70:FF:000001">
    <property type="entry name" value="Polyribonucleotide nucleotidyltransferase"/>
    <property type="match status" value="1"/>
</dbReference>
<dbReference type="FunFam" id="3.30.230.70:FF:000002">
    <property type="entry name" value="Polyribonucleotide nucleotidyltransferase"/>
    <property type="match status" value="1"/>
</dbReference>
<dbReference type="Gene3D" id="3.30.230.70">
    <property type="entry name" value="GHMP Kinase, N-terminal domain"/>
    <property type="match status" value="2"/>
</dbReference>
<dbReference type="Gene3D" id="3.30.1370.10">
    <property type="entry name" value="K Homology domain, type 1"/>
    <property type="match status" value="1"/>
</dbReference>
<dbReference type="Gene3D" id="2.40.50.140">
    <property type="entry name" value="Nucleic acid-binding proteins"/>
    <property type="match status" value="1"/>
</dbReference>
<dbReference type="HAMAP" id="MF_01595">
    <property type="entry name" value="PNPase"/>
    <property type="match status" value="1"/>
</dbReference>
<dbReference type="InterPro" id="IPR001247">
    <property type="entry name" value="ExoRNase_PH_dom1"/>
</dbReference>
<dbReference type="InterPro" id="IPR015847">
    <property type="entry name" value="ExoRNase_PH_dom2"/>
</dbReference>
<dbReference type="InterPro" id="IPR036345">
    <property type="entry name" value="ExoRNase_PH_dom2_sf"/>
</dbReference>
<dbReference type="InterPro" id="IPR004087">
    <property type="entry name" value="KH_dom"/>
</dbReference>
<dbReference type="InterPro" id="IPR004088">
    <property type="entry name" value="KH_dom_type_1"/>
</dbReference>
<dbReference type="InterPro" id="IPR036612">
    <property type="entry name" value="KH_dom_type_1_sf"/>
</dbReference>
<dbReference type="InterPro" id="IPR012340">
    <property type="entry name" value="NA-bd_OB-fold"/>
</dbReference>
<dbReference type="InterPro" id="IPR012162">
    <property type="entry name" value="PNPase"/>
</dbReference>
<dbReference type="InterPro" id="IPR027408">
    <property type="entry name" value="PNPase/RNase_PH_dom_sf"/>
</dbReference>
<dbReference type="InterPro" id="IPR015848">
    <property type="entry name" value="PNPase_PH_RNA-bd_bac/org-type"/>
</dbReference>
<dbReference type="InterPro" id="IPR036456">
    <property type="entry name" value="PNPase_PH_RNA-bd_sf"/>
</dbReference>
<dbReference type="InterPro" id="IPR020568">
    <property type="entry name" value="Ribosomal_Su5_D2-typ_SF"/>
</dbReference>
<dbReference type="InterPro" id="IPR003029">
    <property type="entry name" value="S1_domain"/>
</dbReference>
<dbReference type="NCBIfam" id="TIGR03591">
    <property type="entry name" value="polynuc_phos"/>
    <property type="match status" value="1"/>
</dbReference>
<dbReference type="NCBIfam" id="NF008805">
    <property type="entry name" value="PRK11824.1"/>
    <property type="match status" value="1"/>
</dbReference>
<dbReference type="PANTHER" id="PTHR11252">
    <property type="entry name" value="POLYRIBONUCLEOTIDE NUCLEOTIDYLTRANSFERASE"/>
    <property type="match status" value="1"/>
</dbReference>
<dbReference type="PANTHER" id="PTHR11252:SF0">
    <property type="entry name" value="POLYRIBONUCLEOTIDE NUCLEOTIDYLTRANSFERASE 1, MITOCHONDRIAL"/>
    <property type="match status" value="1"/>
</dbReference>
<dbReference type="Pfam" id="PF00013">
    <property type="entry name" value="KH_1"/>
    <property type="match status" value="1"/>
</dbReference>
<dbReference type="Pfam" id="PF03726">
    <property type="entry name" value="PNPase"/>
    <property type="match status" value="1"/>
</dbReference>
<dbReference type="Pfam" id="PF01138">
    <property type="entry name" value="RNase_PH"/>
    <property type="match status" value="2"/>
</dbReference>
<dbReference type="Pfam" id="PF03725">
    <property type="entry name" value="RNase_PH_C"/>
    <property type="match status" value="2"/>
</dbReference>
<dbReference type="Pfam" id="PF00575">
    <property type="entry name" value="S1"/>
    <property type="match status" value="1"/>
</dbReference>
<dbReference type="PIRSF" id="PIRSF005499">
    <property type="entry name" value="PNPase"/>
    <property type="match status" value="1"/>
</dbReference>
<dbReference type="SMART" id="SM00322">
    <property type="entry name" value="KH"/>
    <property type="match status" value="1"/>
</dbReference>
<dbReference type="SMART" id="SM00316">
    <property type="entry name" value="S1"/>
    <property type="match status" value="1"/>
</dbReference>
<dbReference type="SUPFAM" id="SSF54791">
    <property type="entry name" value="Eukaryotic type KH-domain (KH-domain type I)"/>
    <property type="match status" value="1"/>
</dbReference>
<dbReference type="SUPFAM" id="SSF50249">
    <property type="entry name" value="Nucleic acid-binding proteins"/>
    <property type="match status" value="1"/>
</dbReference>
<dbReference type="SUPFAM" id="SSF46915">
    <property type="entry name" value="Polynucleotide phosphorylase/guanosine pentaphosphate synthase (PNPase/GPSI), domain 3"/>
    <property type="match status" value="1"/>
</dbReference>
<dbReference type="SUPFAM" id="SSF55666">
    <property type="entry name" value="Ribonuclease PH domain 2-like"/>
    <property type="match status" value="2"/>
</dbReference>
<dbReference type="SUPFAM" id="SSF54211">
    <property type="entry name" value="Ribosomal protein S5 domain 2-like"/>
    <property type="match status" value="2"/>
</dbReference>
<dbReference type="PROSITE" id="PS50084">
    <property type="entry name" value="KH_TYPE_1"/>
    <property type="match status" value="1"/>
</dbReference>
<dbReference type="PROSITE" id="PS50126">
    <property type="entry name" value="S1"/>
    <property type="match status" value="1"/>
</dbReference>
<evidence type="ECO:0000255" key="1">
    <source>
        <dbReference type="HAMAP-Rule" id="MF_01595"/>
    </source>
</evidence>
<evidence type="ECO:0000256" key="2">
    <source>
        <dbReference type="SAM" id="MobiDB-lite"/>
    </source>
</evidence>
<sequence length="741" mass="80999">MAKQTFEMTFEGRPLVVEVGQVAKQANGAVVVRYGDTTVLSVAVMSKKMATANFFPLQVNYEEKMYAAGKFPGGFSKREGRPSTDATLTARLIDRPIRPMFAEGFRNEVQVINTVLSYDENASAPMAAMFGSSLALSISDIPFNGPIAGVQVAYAAEDFIINPSASDKEVSHLDLIVAGTKEAINMVEAGAQELSEDIMLQALLKGHEAIQELVDFQNYIVAAVGKEKAEVELFQVDADLKAEIEAVYYDQLAKAVQVEEKLAREAATKAVKEEVLASYQERFAEDEDKETILRDVVEILEQMEHAEVRRLITEDKIRPDGRRVDEIRPLDAEIDFLPNVHGSGLFTRGQTQALSVLTLAPMSDTQLVDGLDPEYKKRFLHHYNFPQYSVGETGRYGAPGRREIGHGALGERALAQVLPSVEEFPYAIRLVAEVLESNGSSSQASICAGTLALMAGGVPIKAPVAGIAMGLISDGTNYTVLTDIQGLEDHFGDMDFKVAGTRLGITALQMDIKISGITPAILEEALAQAKVARFEILDVIESAIAEPRSELAPTAPKIDSIQIPVDKIKVVIGKGGETIDKIIAETGVTIDIDEEGLVQIFSSDQDAIDRAKTIISDLVREAKVGEVYTVPVVRIEKFGAFVHLFNKTDALVHISELAWKHTEHVEDVVKVGDMVTVKIIKIDEKGRVDASIKTLLPKPEKNEDGENGEEHRHCCCSHHKPDHHNESVEAPKKSDESETKE</sequence>
<comment type="function">
    <text evidence="1">Involved in mRNA degradation. Catalyzes the phosphorolysis of single-stranded polyribonucleotides processively in the 3'- to 5'-direction.</text>
</comment>
<comment type="catalytic activity">
    <reaction evidence="1">
        <text>RNA(n+1) + phosphate = RNA(n) + a ribonucleoside 5'-diphosphate</text>
        <dbReference type="Rhea" id="RHEA:22096"/>
        <dbReference type="Rhea" id="RHEA-COMP:14527"/>
        <dbReference type="Rhea" id="RHEA-COMP:17342"/>
        <dbReference type="ChEBI" id="CHEBI:43474"/>
        <dbReference type="ChEBI" id="CHEBI:57930"/>
        <dbReference type="ChEBI" id="CHEBI:140395"/>
        <dbReference type="EC" id="2.7.7.8"/>
    </reaction>
</comment>
<comment type="cofactor">
    <cofactor evidence="1">
        <name>Mg(2+)</name>
        <dbReference type="ChEBI" id="CHEBI:18420"/>
    </cofactor>
</comment>
<comment type="subcellular location">
    <subcellularLocation>
        <location evidence="1">Cytoplasm</location>
    </subcellularLocation>
</comment>
<comment type="similarity">
    <text evidence="1">Belongs to the polyribonucleotide nucleotidyltransferase family.</text>
</comment>
<keyword id="KW-0963">Cytoplasm</keyword>
<keyword id="KW-0460">Magnesium</keyword>
<keyword id="KW-0479">Metal-binding</keyword>
<keyword id="KW-0548">Nucleotidyltransferase</keyword>
<keyword id="KW-1185">Reference proteome</keyword>
<keyword id="KW-0694">RNA-binding</keyword>
<keyword id="KW-0808">Transferase</keyword>
<organism>
    <name type="scientific">Streptococcus thermophilus (strain ATCC BAA-250 / LMG 18311)</name>
    <dbReference type="NCBI Taxonomy" id="264199"/>
    <lineage>
        <taxon>Bacteria</taxon>
        <taxon>Bacillati</taxon>
        <taxon>Bacillota</taxon>
        <taxon>Bacilli</taxon>
        <taxon>Lactobacillales</taxon>
        <taxon>Streptococcaceae</taxon>
        <taxon>Streptococcus</taxon>
    </lineage>
</organism>
<proteinExistence type="inferred from homology"/>
<gene>
    <name evidence="1" type="primary">pnp</name>
    <name type="ordered locus">stu0081</name>
</gene>